<reference key="1">
    <citation type="journal article" date="2008" name="Antimicrob. Agents Chemother.">
        <title>Mutated response regulator graR is responsible for phenotypic conversion of Staphylococcus aureus from heterogeneous vancomycin-intermediate resistance to vancomycin-intermediate resistance.</title>
        <authorList>
            <person name="Neoh H.-M."/>
            <person name="Cui L."/>
            <person name="Yuzawa H."/>
            <person name="Takeuchi F."/>
            <person name="Matsuo M."/>
            <person name="Hiramatsu K."/>
        </authorList>
    </citation>
    <scope>NUCLEOTIDE SEQUENCE [LARGE SCALE GENOMIC DNA]</scope>
    <source>
        <strain>Mu3 / ATCC 700698</strain>
    </source>
</reference>
<gene>
    <name evidence="1" type="primary">murD</name>
    <name type="ordered locus">SAHV_1173</name>
</gene>
<evidence type="ECO:0000255" key="1">
    <source>
        <dbReference type="HAMAP-Rule" id="MF_00639"/>
    </source>
</evidence>
<sequence>MLNYTGLENKNVLVVGLAKSGYEAAKLLSKLGANVTVNDGKDLSQDAHAKDLESMGISVVSGSHPLTLLDNNPIIVKNPGIPYTVSIIDEAVKRGLKILTEVELSYLISEAPIIAVTGTNGKTTVTSLIGDMFKKSRLTGRLSGNIGYVASKVAQEVKPTDYLVTELSSFQLLGIEKYKPHIAIITNIYSAHLDYHENLENYQNAKKQIYKNQTEEDYLICNYHQRQVIESEELKAKTLYFSTQQEVDGIYIKDGFIVYKGVRIINTEDLVLPGEHNLENILAAVLACILAGVPIKAIIDSLTTFSGIEHRLQYVGTNRTNKYYNDSKATNTLATQFALNSFNQPIIWLCGGLDRGNEFDELIPYMENVRAMVVFGQTKAKFAKLGNSQGKSVIEANNVEDAVDKVQDIIEPNDVVLLSPACASWDQYSTFEERGEKFIERFRAHLPSY</sequence>
<keyword id="KW-0067">ATP-binding</keyword>
<keyword id="KW-0131">Cell cycle</keyword>
<keyword id="KW-0132">Cell division</keyword>
<keyword id="KW-0133">Cell shape</keyword>
<keyword id="KW-0961">Cell wall biogenesis/degradation</keyword>
<keyword id="KW-0963">Cytoplasm</keyword>
<keyword id="KW-0436">Ligase</keyword>
<keyword id="KW-0547">Nucleotide-binding</keyword>
<keyword id="KW-0573">Peptidoglycan synthesis</keyword>
<feature type="chain" id="PRO_1000056888" description="UDP-N-acetylmuramoylalanine--D-glutamate ligase">
    <location>
        <begin position="1"/>
        <end position="449"/>
    </location>
</feature>
<feature type="binding site" evidence="1">
    <location>
        <begin position="118"/>
        <end position="124"/>
    </location>
    <ligand>
        <name>ATP</name>
        <dbReference type="ChEBI" id="CHEBI:30616"/>
    </ligand>
</feature>
<comment type="function">
    <text evidence="1">Cell wall formation. Catalyzes the addition of glutamate to the nucleotide precursor UDP-N-acetylmuramoyl-L-alanine (UMA).</text>
</comment>
<comment type="catalytic activity">
    <reaction evidence="1">
        <text>UDP-N-acetyl-alpha-D-muramoyl-L-alanine + D-glutamate + ATP = UDP-N-acetyl-alpha-D-muramoyl-L-alanyl-D-glutamate + ADP + phosphate + H(+)</text>
        <dbReference type="Rhea" id="RHEA:16429"/>
        <dbReference type="ChEBI" id="CHEBI:15378"/>
        <dbReference type="ChEBI" id="CHEBI:29986"/>
        <dbReference type="ChEBI" id="CHEBI:30616"/>
        <dbReference type="ChEBI" id="CHEBI:43474"/>
        <dbReference type="ChEBI" id="CHEBI:83898"/>
        <dbReference type="ChEBI" id="CHEBI:83900"/>
        <dbReference type="ChEBI" id="CHEBI:456216"/>
        <dbReference type="EC" id="6.3.2.9"/>
    </reaction>
</comment>
<comment type="pathway">
    <text evidence="1">Cell wall biogenesis; peptidoglycan biosynthesis.</text>
</comment>
<comment type="subcellular location">
    <subcellularLocation>
        <location evidence="1">Cytoplasm</location>
    </subcellularLocation>
</comment>
<comment type="similarity">
    <text evidence="1">Belongs to the MurCDEF family.</text>
</comment>
<organism>
    <name type="scientific">Staphylococcus aureus (strain Mu3 / ATCC 700698)</name>
    <dbReference type="NCBI Taxonomy" id="418127"/>
    <lineage>
        <taxon>Bacteria</taxon>
        <taxon>Bacillati</taxon>
        <taxon>Bacillota</taxon>
        <taxon>Bacilli</taxon>
        <taxon>Bacillales</taxon>
        <taxon>Staphylococcaceae</taxon>
        <taxon>Staphylococcus</taxon>
    </lineage>
</organism>
<accession>A7X1C4</accession>
<protein>
    <recommendedName>
        <fullName evidence="1">UDP-N-acetylmuramoylalanine--D-glutamate ligase</fullName>
        <ecNumber evidence="1">6.3.2.9</ecNumber>
    </recommendedName>
    <alternativeName>
        <fullName evidence="1">D-glutamic acid-adding enzyme</fullName>
    </alternativeName>
    <alternativeName>
        <fullName evidence="1">UDP-N-acetylmuramoyl-L-alanyl-D-glutamate synthetase</fullName>
    </alternativeName>
</protein>
<dbReference type="EC" id="6.3.2.9" evidence="1"/>
<dbReference type="EMBL" id="AP009324">
    <property type="protein sequence ID" value="BAF78056.1"/>
    <property type="molecule type" value="Genomic_DNA"/>
</dbReference>
<dbReference type="RefSeq" id="WP_000935991.1">
    <property type="nucleotide sequence ID" value="NZ_CTYB01000010.1"/>
</dbReference>
<dbReference type="SMR" id="A7X1C4"/>
<dbReference type="KEGG" id="saw:SAHV_1173"/>
<dbReference type="HOGENOM" id="CLU_032540_0_1_9"/>
<dbReference type="UniPathway" id="UPA00219"/>
<dbReference type="GO" id="GO:0005737">
    <property type="term" value="C:cytoplasm"/>
    <property type="evidence" value="ECO:0007669"/>
    <property type="project" value="UniProtKB-SubCell"/>
</dbReference>
<dbReference type="GO" id="GO:0005524">
    <property type="term" value="F:ATP binding"/>
    <property type="evidence" value="ECO:0007669"/>
    <property type="project" value="UniProtKB-UniRule"/>
</dbReference>
<dbReference type="GO" id="GO:0008764">
    <property type="term" value="F:UDP-N-acetylmuramoylalanine-D-glutamate ligase activity"/>
    <property type="evidence" value="ECO:0007669"/>
    <property type="project" value="UniProtKB-UniRule"/>
</dbReference>
<dbReference type="GO" id="GO:0051301">
    <property type="term" value="P:cell division"/>
    <property type="evidence" value="ECO:0007669"/>
    <property type="project" value="UniProtKB-KW"/>
</dbReference>
<dbReference type="GO" id="GO:0071555">
    <property type="term" value="P:cell wall organization"/>
    <property type="evidence" value="ECO:0007669"/>
    <property type="project" value="UniProtKB-KW"/>
</dbReference>
<dbReference type="GO" id="GO:0009252">
    <property type="term" value="P:peptidoglycan biosynthetic process"/>
    <property type="evidence" value="ECO:0007669"/>
    <property type="project" value="UniProtKB-UniRule"/>
</dbReference>
<dbReference type="GO" id="GO:0008360">
    <property type="term" value="P:regulation of cell shape"/>
    <property type="evidence" value="ECO:0007669"/>
    <property type="project" value="UniProtKB-KW"/>
</dbReference>
<dbReference type="Gene3D" id="3.90.190.20">
    <property type="entry name" value="Mur ligase, C-terminal domain"/>
    <property type="match status" value="1"/>
</dbReference>
<dbReference type="Gene3D" id="3.40.1190.10">
    <property type="entry name" value="Mur-like, catalytic domain"/>
    <property type="match status" value="1"/>
</dbReference>
<dbReference type="Gene3D" id="3.40.50.720">
    <property type="entry name" value="NAD(P)-binding Rossmann-like Domain"/>
    <property type="match status" value="1"/>
</dbReference>
<dbReference type="HAMAP" id="MF_00639">
    <property type="entry name" value="MurD"/>
    <property type="match status" value="1"/>
</dbReference>
<dbReference type="InterPro" id="IPR036565">
    <property type="entry name" value="Mur-like_cat_sf"/>
</dbReference>
<dbReference type="InterPro" id="IPR004101">
    <property type="entry name" value="Mur_ligase_C"/>
</dbReference>
<dbReference type="InterPro" id="IPR036615">
    <property type="entry name" value="Mur_ligase_C_dom_sf"/>
</dbReference>
<dbReference type="InterPro" id="IPR013221">
    <property type="entry name" value="Mur_ligase_cen"/>
</dbReference>
<dbReference type="InterPro" id="IPR005762">
    <property type="entry name" value="MurD"/>
</dbReference>
<dbReference type="NCBIfam" id="TIGR01087">
    <property type="entry name" value="murD"/>
    <property type="match status" value="1"/>
</dbReference>
<dbReference type="PANTHER" id="PTHR43692">
    <property type="entry name" value="UDP-N-ACETYLMURAMOYLALANINE--D-GLUTAMATE LIGASE"/>
    <property type="match status" value="1"/>
</dbReference>
<dbReference type="PANTHER" id="PTHR43692:SF1">
    <property type="entry name" value="UDP-N-ACETYLMURAMOYLALANINE--D-GLUTAMATE LIGASE"/>
    <property type="match status" value="1"/>
</dbReference>
<dbReference type="Pfam" id="PF02875">
    <property type="entry name" value="Mur_ligase_C"/>
    <property type="match status" value="1"/>
</dbReference>
<dbReference type="Pfam" id="PF08245">
    <property type="entry name" value="Mur_ligase_M"/>
    <property type="match status" value="1"/>
</dbReference>
<dbReference type="Pfam" id="PF21799">
    <property type="entry name" value="MurD-like_N"/>
    <property type="match status" value="1"/>
</dbReference>
<dbReference type="SUPFAM" id="SSF51984">
    <property type="entry name" value="MurCD N-terminal domain"/>
    <property type="match status" value="1"/>
</dbReference>
<dbReference type="SUPFAM" id="SSF53623">
    <property type="entry name" value="MurD-like peptide ligases, catalytic domain"/>
    <property type="match status" value="1"/>
</dbReference>
<dbReference type="SUPFAM" id="SSF53244">
    <property type="entry name" value="MurD-like peptide ligases, peptide-binding domain"/>
    <property type="match status" value="1"/>
</dbReference>
<proteinExistence type="inferred from homology"/>
<name>MURD_STAA1</name>